<accession>Q2YMH2</accession>
<organism>
    <name type="scientific">Brucella abortus (strain 2308)</name>
    <dbReference type="NCBI Taxonomy" id="359391"/>
    <lineage>
        <taxon>Bacteria</taxon>
        <taxon>Pseudomonadati</taxon>
        <taxon>Pseudomonadota</taxon>
        <taxon>Alphaproteobacteria</taxon>
        <taxon>Hyphomicrobiales</taxon>
        <taxon>Brucellaceae</taxon>
        <taxon>Brucella/Ochrobactrum group</taxon>
        <taxon>Brucella</taxon>
    </lineage>
</organism>
<reference key="1">
    <citation type="journal article" date="2005" name="Infect. Immun.">
        <title>Whole-genome analyses of speciation events in pathogenic Brucellae.</title>
        <authorList>
            <person name="Chain P.S."/>
            <person name="Comerci D.J."/>
            <person name="Tolmasky M.E."/>
            <person name="Larimer F.W."/>
            <person name="Malfatti S.A."/>
            <person name="Vergez L.M."/>
            <person name="Aguero F."/>
            <person name="Land M.L."/>
            <person name="Ugalde R.A."/>
            <person name="Garcia E."/>
        </authorList>
    </citation>
    <scope>NUCLEOTIDE SEQUENCE [LARGE SCALE GENOMIC DNA]</scope>
    <source>
        <strain>2308</strain>
    </source>
</reference>
<sequence>MEVILLERIGRLGQMGDTVKVKDGYARNFLLPQGKALRANEANKKKFEGQRAQLEAQNLERKNEAQAVADKLNGESFIVVRSAGETGQLYGSVSTRDIAEIITANGFTLHRNQVELNHPIKTIGLHEVSVSLHPEVQVKVMVNIARSTEEAERQAKGEDLTSIEAIYGIEEQPLSEEVFDDEDEAEDQA</sequence>
<comment type="function">
    <text evidence="1">Binds to the 23S rRNA.</text>
</comment>
<comment type="similarity">
    <text evidence="1">Belongs to the bacterial ribosomal protein bL9 family.</text>
</comment>
<keyword id="KW-1185">Reference proteome</keyword>
<keyword id="KW-0687">Ribonucleoprotein</keyword>
<keyword id="KW-0689">Ribosomal protein</keyword>
<keyword id="KW-0694">RNA-binding</keyword>
<keyword id="KW-0699">rRNA-binding</keyword>
<name>RL9_BRUA2</name>
<feature type="chain" id="PRO_0000236496" description="Large ribosomal subunit protein bL9">
    <location>
        <begin position="1"/>
        <end position="189"/>
    </location>
</feature>
<evidence type="ECO:0000255" key="1">
    <source>
        <dbReference type="HAMAP-Rule" id="MF_00503"/>
    </source>
</evidence>
<evidence type="ECO:0000305" key="2"/>
<dbReference type="EMBL" id="AM040264">
    <property type="protein sequence ID" value="CAJ10433.1"/>
    <property type="molecule type" value="Genomic_DNA"/>
</dbReference>
<dbReference type="RefSeq" id="WP_002963608.1">
    <property type="nucleotide sequence ID" value="NZ_KN046823.1"/>
</dbReference>
<dbReference type="SMR" id="Q2YMH2"/>
<dbReference type="STRING" id="359391.BAB1_0477"/>
<dbReference type="GeneID" id="97534178"/>
<dbReference type="KEGG" id="bmf:BAB1_0477"/>
<dbReference type="PATRIC" id="fig|359391.11.peg.2517"/>
<dbReference type="HOGENOM" id="CLU_078938_1_0_5"/>
<dbReference type="PhylomeDB" id="Q2YMH2"/>
<dbReference type="Proteomes" id="UP000002719">
    <property type="component" value="Chromosome I"/>
</dbReference>
<dbReference type="GO" id="GO:1990904">
    <property type="term" value="C:ribonucleoprotein complex"/>
    <property type="evidence" value="ECO:0007669"/>
    <property type="project" value="UniProtKB-KW"/>
</dbReference>
<dbReference type="GO" id="GO:0005840">
    <property type="term" value="C:ribosome"/>
    <property type="evidence" value="ECO:0007669"/>
    <property type="project" value="UniProtKB-KW"/>
</dbReference>
<dbReference type="GO" id="GO:0019843">
    <property type="term" value="F:rRNA binding"/>
    <property type="evidence" value="ECO:0007669"/>
    <property type="project" value="UniProtKB-UniRule"/>
</dbReference>
<dbReference type="GO" id="GO:0003735">
    <property type="term" value="F:structural constituent of ribosome"/>
    <property type="evidence" value="ECO:0007669"/>
    <property type="project" value="InterPro"/>
</dbReference>
<dbReference type="GO" id="GO:0006412">
    <property type="term" value="P:translation"/>
    <property type="evidence" value="ECO:0007669"/>
    <property type="project" value="UniProtKB-UniRule"/>
</dbReference>
<dbReference type="Gene3D" id="3.10.430.100">
    <property type="entry name" value="Ribosomal protein L9, C-terminal domain"/>
    <property type="match status" value="1"/>
</dbReference>
<dbReference type="Gene3D" id="3.40.5.10">
    <property type="entry name" value="Ribosomal protein L9, N-terminal domain"/>
    <property type="match status" value="1"/>
</dbReference>
<dbReference type="HAMAP" id="MF_00503">
    <property type="entry name" value="Ribosomal_bL9"/>
    <property type="match status" value="1"/>
</dbReference>
<dbReference type="InterPro" id="IPR000244">
    <property type="entry name" value="Ribosomal_bL9"/>
</dbReference>
<dbReference type="InterPro" id="IPR009027">
    <property type="entry name" value="Ribosomal_bL9/RNase_H1_N"/>
</dbReference>
<dbReference type="InterPro" id="IPR020594">
    <property type="entry name" value="Ribosomal_bL9_bac/chp"/>
</dbReference>
<dbReference type="InterPro" id="IPR020069">
    <property type="entry name" value="Ribosomal_bL9_C"/>
</dbReference>
<dbReference type="InterPro" id="IPR036791">
    <property type="entry name" value="Ribosomal_bL9_C_sf"/>
</dbReference>
<dbReference type="InterPro" id="IPR020070">
    <property type="entry name" value="Ribosomal_bL9_N"/>
</dbReference>
<dbReference type="InterPro" id="IPR036935">
    <property type="entry name" value="Ribosomal_bL9_N_sf"/>
</dbReference>
<dbReference type="NCBIfam" id="TIGR00158">
    <property type="entry name" value="L9"/>
    <property type="match status" value="1"/>
</dbReference>
<dbReference type="PANTHER" id="PTHR21368">
    <property type="entry name" value="50S RIBOSOMAL PROTEIN L9"/>
    <property type="match status" value="1"/>
</dbReference>
<dbReference type="Pfam" id="PF03948">
    <property type="entry name" value="Ribosomal_L9_C"/>
    <property type="match status" value="1"/>
</dbReference>
<dbReference type="Pfam" id="PF01281">
    <property type="entry name" value="Ribosomal_L9_N"/>
    <property type="match status" value="1"/>
</dbReference>
<dbReference type="SUPFAM" id="SSF55658">
    <property type="entry name" value="L9 N-domain-like"/>
    <property type="match status" value="1"/>
</dbReference>
<dbReference type="SUPFAM" id="SSF55653">
    <property type="entry name" value="Ribosomal protein L9 C-domain"/>
    <property type="match status" value="1"/>
</dbReference>
<dbReference type="PROSITE" id="PS00651">
    <property type="entry name" value="RIBOSOMAL_L9"/>
    <property type="match status" value="1"/>
</dbReference>
<protein>
    <recommendedName>
        <fullName evidence="1">Large ribosomal subunit protein bL9</fullName>
    </recommendedName>
    <alternativeName>
        <fullName evidence="2">50S ribosomal protein L9</fullName>
    </alternativeName>
</protein>
<gene>
    <name evidence="1" type="primary">rplI</name>
    <name type="ordered locus">BAB1_0477</name>
</gene>
<proteinExistence type="inferred from homology"/>